<evidence type="ECO:0000255" key="1">
    <source>
        <dbReference type="HAMAP-Rule" id="MF_00127"/>
    </source>
</evidence>
<evidence type="ECO:0000256" key="2">
    <source>
        <dbReference type="SAM" id="MobiDB-lite"/>
    </source>
</evidence>
<sequence>MYDSVKGFRDFYPKEMQARRWAMDTLEDVAQRYGFREIGTPALEPTEMYVDKSGEEIVEELYSFEDKGGRKVALTPELTPTVARMFVAKQQELSKPIKWVSTRPFWRYEEPQQGRFREFYQTNVDIFGSAEPTADAEILAVAVDMLTDLGLTGEDFEIRVSHRDILSGVLESFEADVDVPEAIRAVDKRAKVDHDEYLDALAEAGLSYGQADTFDEMLQIDAEEIETLGDLTGSEDVRTATDNLQAVLDAAEDFGVREHLTVSLTTARGLDYYTGVVFECFDSTGEVSRSVFGGGRYDDLIEGFGGQPTPAVGFAPGHATLQLLCQRAGVWPAEELSTDYYVLQVGDTRPTAARIARDLRERGHVVESDVADRSFGAQMGYADGINAETVVIVGEQDLENDEVTLKEMDDGEQVSVPLSAFPGDYDRPTFEDFAE</sequence>
<gene>
    <name evidence="1" type="primary">hisS</name>
    <name type="ordered locus">rrnAC3183</name>
</gene>
<protein>
    <recommendedName>
        <fullName evidence="1">Histidine--tRNA ligase</fullName>
        <ecNumber evidence="1">6.1.1.21</ecNumber>
    </recommendedName>
    <alternativeName>
        <fullName evidence="1">Histidyl-tRNA synthetase</fullName>
        <shortName evidence="1">HisRS</shortName>
    </alternativeName>
</protein>
<comment type="catalytic activity">
    <reaction evidence="1">
        <text>tRNA(His) + L-histidine + ATP = L-histidyl-tRNA(His) + AMP + diphosphate + H(+)</text>
        <dbReference type="Rhea" id="RHEA:17313"/>
        <dbReference type="Rhea" id="RHEA-COMP:9665"/>
        <dbReference type="Rhea" id="RHEA-COMP:9689"/>
        <dbReference type="ChEBI" id="CHEBI:15378"/>
        <dbReference type="ChEBI" id="CHEBI:30616"/>
        <dbReference type="ChEBI" id="CHEBI:33019"/>
        <dbReference type="ChEBI" id="CHEBI:57595"/>
        <dbReference type="ChEBI" id="CHEBI:78442"/>
        <dbReference type="ChEBI" id="CHEBI:78527"/>
        <dbReference type="ChEBI" id="CHEBI:456215"/>
        <dbReference type="EC" id="6.1.1.21"/>
    </reaction>
</comment>
<comment type="subcellular location">
    <subcellularLocation>
        <location evidence="1">Cytoplasm</location>
    </subcellularLocation>
</comment>
<comment type="similarity">
    <text evidence="1">Belongs to the class-II aminoacyl-tRNA synthetase family.</text>
</comment>
<keyword id="KW-0030">Aminoacyl-tRNA synthetase</keyword>
<keyword id="KW-0067">ATP-binding</keyword>
<keyword id="KW-0963">Cytoplasm</keyword>
<keyword id="KW-0436">Ligase</keyword>
<keyword id="KW-0547">Nucleotide-binding</keyword>
<keyword id="KW-0648">Protein biosynthesis</keyword>
<keyword id="KW-1185">Reference proteome</keyword>
<organism>
    <name type="scientific">Haloarcula marismortui (strain ATCC 43049 / DSM 3752 / JCM 8966 / VKM B-1809)</name>
    <name type="common">Halobacterium marismortui</name>
    <dbReference type="NCBI Taxonomy" id="272569"/>
    <lineage>
        <taxon>Archaea</taxon>
        <taxon>Methanobacteriati</taxon>
        <taxon>Methanobacteriota</taxon>
        <taxon>Stenosarchaea group</taxon>
        <taxon>Halobacteria</taxon>
        <taxon>Halobacteriales</taxon>
        <taxon>Haloarculaceae</taxon>
        <taxon>Haloarcula</taxon>
    </lineage>
</organism>
<dbReference type="EC" id="6.1.1.21" evidence="1"/>
<dbReference type="EMBL" id="AY596297">
    <property type="protein sequence ID" value="AAV47889.1"/>
    <property type="molecule type" value="Genomic_DNA"/>
</dbReference>
<dbReference type="RefSeq" id="WP_011224659.1">
    <property type="nucleotide sequence ID" value="NC_006396.1"/>
</dbReference>
<dbReference type="SMR" id="Q5UXW4"/>
<dbReference type="STRING" id="272569.rrnAC3183"/>
<dbReference type="PaxDb" id="272569-rrnAC3183"/>
<dbReference type="EnsemblBacteria" id="AAV47889">
    <property type="protein sequence ID" value="AAV47889"/>
    <property type="gene ID" value="rrnAC3183"/>
</dbReference>
<dbReference type="GeneID" id="40153990"/>
<dbReference type="KEGG" id="hma:rrnAC3183"/>
<dbReference type="PATRIC" id="fig|272569.17.peg.3723"/>
<dbReference type="eggNOG" id="arCOG00404">
    <property type="taxonomic scope" value="Archaea"/>
</dbReference>
<dbReference type="HOGENOM" id="CLU_025113_3_1_2"/>
<dbReference type="Proteomes" id="UP000001169">
    <property type="component" value="Chromosome I"/>
</dbReference>
<dbReference type="GO" id="GO:0005737">
    <property type="term" value="C:cytoplasm"/>
    <property type="evidence" value="ECO:0007669"/>
    <property type="project" value="UniProtKB-SubCell"/>
</dbReference>
<dbReference type="GO" id="GO:0005524">
    <property type="term" value="F:ATP binding"/>
    <property type="evidence" value="ECO:0007669"/>
    <property type="project" value="UniProtKB-UniRule"/>
</dbReference>
<dbReference type="GO" id="GO:0004821">
    <property type="term" value="F:histidine-tRNA ligase activity"/>
    <property type="evidence" value="ECO:0007669"/>
    <property type="project" value="UniProtKB-UniRule"/>
</dbReference>
<dbReference type="GO" id="GO:0006427">
    <property type="term" value="P:histidyl-tRNA aminoacylation"/>
    <property type="evidence" value="ECO:0007669"/>
    <property type="project" value="UniProtKB-UniRule"/>
</dbReference>
<dbReference type="CDD" id="cd00773">
    <property type="entry name" value="HisRS-like_core"/>
    <property type="match status" value="1"/>
</dbReference>
<dbReference type="Gene3D" id="3.40.50.800">
    <property type="entry name" value="Anticodon-binding domain"/>
    <property type="match status" value="1"/>
</dbReference>
<dbReference type="Gene3D" id="3.30.930.10">
    <property type="entry name" value="Bira Bifunctional Protein, Domain 2"/>
    <property type="match status" value="1"/>
</dbReference>
<dbReference type="HAMAP" id="MF_00127">
    <property type="entry name" value="His_tRNA_synth"/>
    <property type="match status" value="1"/>
</dbReference>
<dbReference type="InterPro" id="IPR006195">
    <property type="entry name" value="aa-tRNA-synth_II"/>
</dbReference>
<dbReference type="InterPro" id="IPR045864">
    <property type="entry name" value="aa-tRNA-synth_II/BPL/LPL"/>
</dbReference>
<dbReference type="InterPro" id="IPR004154">
    <property type="entry name" value="Anticodon-bd"/>
</dbReference>
<dbReference type="InterPro" id="IPR036621">
    <property type="entry name" value="Anticodon-bd_dom_sf"/>
</dbReference>
<dbReference type="InterPro" id="IPR015807">
    <property type="entry name" value="His-tRNA-ligase"/>
</dbReference>
<dbReference type="InterPro" id="IPR041715">
    <property type="entry name" value="HisRS-like_core"/>
</dbReference>
<dbReference type="InterPro" id="IPR004516">
    <property type="entry name" value="HisRS/HisZ"/>
</dbReference>
<dbReference type="NCBIfam" id="TIGR00442">
    <property type="entry name" value="hisS"/>
    <property type="match status" value="1"/>
</dbReference>
<dbReference type="PANTHER" id="PTHR43707:SF1">
    <property type="entry name" value="HISTIDINE--TRNA LIGASE, MITOCHONDRIAL-RELATED"/>
    <property type="match status" value="1"/>
</dbReference>
<dbReference type="PANTHER" id="PTHR43707">
    <property type="entry name" value="HISTIDYL-TRNA SYNTHETASE"/>
    <property type="match status" value="1"/>
</dbReference>
<dbReference type="Pfam" id="PF03129">
    <property type="entry name" value="HGTP_anticodon"/>
    <property type="match status" value="1"/>
</dbReference>
<dbReference type="Pfam" id="PF13393">
    <property type="entry name" value="tRNA-synt_His"/>
    <property type="match status" value="1"/>
</dbReference>
<dbReference type="PIRSF" id="PIRSF001549">
    <property type="entry name" value="His-tRNA_synth"/>
    <property type="match status" value="1"/>
</dbReference>
<dbReference type="SUPFAM" id="SSF52954">
    <property type="entry name" value="Class II aaRS ABD-related"/>
    <property type="match status" value="1"/>
</dbReference>
<dbReference type="SUPFAM" id="SSF55681">
    <property type="entry name" value="Class II aaRS and biotin synthetases"/>
    <property type="match status" value="1"/>
</dbReference>
<dbReference type="PROSITE" id="PS50862">
    <property type="entry name" value="AA_TRNA_LIGASE_II"/>
    <property type="match status" value="1"/>
</dbReference>
<name>SYH_HALMA</name>
<feature type="chain" id="PRO_0000136309" description="Histidine--tRNA ligase">
    <location>
        <begin position="1"/>
        <end position="435"/>
    </location>
</feature>
<feature type="region of interest" description="Disordered" evidence="2">
    <location>
        <begin position="415"/>
        <end position="435"/>
    </location>
</feature>
<feature type="compositionally biased region" description="Basic and acidic residues" evidence="2">
    <location>
        <begin position="424"/>
        <end position="435"/>
    </location>
</feature>
<accession>Q5UXW4</accession>
<reference key="1">
    <citation type="journal article" date="2004" name="Genome Res.">
        <title>Genome sequence of Haloarcula marismortui: a halophilic archaeon from the Dead Sea.</title>
        <authorList>
            <person name="Baliga N.S."/>
            <person name="Bonneau R."/>
            <person name="Facciotti M.T."/>
            <person name="Pan M."/>
            <person name="Glusman G."/>
            <person name="Deutsch E.W."/>
            <person name="Shannon P."/>
            <person name="Chiu Y."/>
            <person name="Weng R.S."/>
            <person name="Gan R.R."/>
            <person name="Hung P."/>
            <person name="Date S.V."/>
            <person name="Marcotte E."/>
            <person name="Hood L."/>
            <person name="Ng W.V."/>
        </authorList>
    </citation>
    <scope>NUCLEOTIDE SEQUENCE [LARGE SCALE GENOMIC DNA]</scope>
    <source>
        <strain>ATCC 43049 / DSM 3752 / JCM 8966 / VKM B-1809</strain>
    </source>
</reference>
<proteinExistence type="inferred from homology"/>